<protein>
    <recommendedName>
        <fullName>Uncharacterized protein PM1773</fullName>
    </recommendedName>
</protein>
<evidence type="ECO:0000255" key="1"/>
<name>Y1773_PASMU</name>
<proteinExistence type="predicted"/>
<keyword id="KW-0175">Coiled coil</keyword>
<keyword id="KW-1185">Reference proteome</keyword>
<dbReference type="EMBL" id="AE004439">
    <property type="protein sequence ID" value="AAK03857.1"/>
    <property type="molecule type" value="Genomic_DNA"/>
</dbReference>
<dbReference type="RefSeq" id="WP_010907326.1">
    <property type="nucleotide sequence ID" value="NC_002663.1"/>
</dbReference>
<dbReference type="SMR" id="Q9CK61"/>
<dbReference type="STRING" id="272843.PM1773"/>
<dbReference type="EnsemblBacteria" id="AAK03857">
    <property type="protein sequence ID" value="AAK03857"/>
    <property type="gene ID" value="PM1773"/>
</dbReference>
<dbReference type="KEGG" id="pmu:PM1773"/>
<dbReference type="PATRIC" id="fig|272843.6.peg.1796"/>
<dbReference type="HOGENOM" id="CLU_1833282_0_0_6"/>
<dbReference type="OrthoDB" id="5681214at2"/>
<dbReference type="Proteomes" id="UP000000809">
    <property type="component" value="Chromosome"/>
</dbReference>
<accession>Q9CK61</accession>
<sequence>MEGDQYLASFNFPAMERKPKVAGLAVLLGEVSELELQKICFNRSLRNEINQLEEQNDISFVRVERKGVYGGVYLSYRVASAKDCEKLAKYYNLKASQRGYKPLSQADINEAMNRFHYVDPLAVVDGERIVQKPSRTKANI</sequence>
<reference key="1">
    <citation type="journal article" date="2001" name="Proc. Natl. Acad. Sci. U.S.A.">
        <title>Complete genomic sequence of Pasteurella multocida Pm70.</title>
        <authorList>
            <person name="May B.J."/>
            <person name="Zhang Q."/>
            <person name="Li L.L."/>
            <person name="Paustian M.L."/>
            <person name="Whittam T.S."/>
            <person name="Kapur V."/>
        </authorList>
    </citation>
    <scope>NUCLEOTIDE SEQUENCE [LARGE SCALE GENOMIC DNA]</scope>
    <source>
        <strain>Pm70</strain>
    </source>
</reference>
<organism>
    <name type="scientific">Pasteurella multocida (strain Pm70)</name>
    <dbReference type="NCBI Taxonomy" id="272843"/>
    <lineage>
        <taxon>Bacteria</taxon>
        <taxon>Pseudomonadati</taxon>
        <taxon>Pseudomonadota</taxon>
        <taxon>Gammaproteobacteria</taxon>
        <taxon>Pasteurellales</taxon>
        <taxon>Pasteurellaceae</taxon>
        <taxon>Pasteurella</taxon>
    </lineage>
</organism>
<gene>
    <name type="ordered locus">PM1773</name>
</gene>
<feature type="chain" id="PRO_0000216331" description="Uncharacterized protein PM1773">
    <location>
        <begin position="1"/>
        <end position="140"/>
    </location>
</feature>
<feature type="coiled-coil region" evidence="1">
    <location>
        <begin position="27"/>
        <end position="65"/>
    </location>
</feature>